<evidence type="ECO:0000250" key="1"/>
<evidence type="ECO:0000250" key="2">
    <source>
        <dbReference type="UniProtKB" id="P01175"/>
    </source>
</evidence>
<evidence type="ECO:0000255" key="3"/>
<evidence type="ECO:0000305" key="4"/>
<dbReference type="EMBL" id="M16233">
    <property type="protein sequence ID" value="AAA48556.1"/>
    <property type="molecule type" value="mRNA"/>
</dbReference>
<dbReference type="PIR" id="B29879">
    <property type="entry name" value="B29879"/>
</dbReference>
<dbReference type="SMR" id="P08163"/>
<dbReference type="GO" id="GO:0005615">
    <property type="term" value="C:extracellular space"/>
    <property type="evidence" value="ECO:0007669"/>
    <property type="project" value="TreeGrafter"/>
</dbReference>
<dbReference type="GO" id="GO:0030141">
    <property type="term" value="C:secretory granule"/>
    <property type="evidence" value="ECO:0007669"/>
    <property type="project" value="TreeGrafter"/>
</dbReference>
<dbReference type="GO" id="GO:0005185">
    <property type="term" value="F:neurohypophyseal hormone activity"/>
    <property type="evidence" value="ECO:0007669"/>
    <property type="project" value="InterPro"/>
</dbReference>
<dbReference type="FunFam" id="2.60.9.10:FF:000001">
    <property type="entry name" value="oxytocin-neurophysin 1"/>
    <property type="match status" value="1"/>
</dbReference>
<dbReference type="Gene3D" id="2.60.9.10">
    <property type="entry name" value="Neurohypophysial hormone domain"/>
    <property type="match status" value="1"/>
</dbReference>
<dbReference type="InterPro" id="IPR000981">
    <property type="entry name" value="Neurhyp_horm"/>
</dbReference>
<dbReference type="InterPro" id="IPR036387">
    <property type="entry name" value="Neurhyp_horm_dom_sf"/>
</dbReference>
<dbReference type="InterPro" id="IPR022423">
    <property type="entry name" value="Neurohypophysial_hormone_CS"/>
</dbReference>
<dbReference type="PANTHER" id="PTHR11681">
    <property type="entry name" value="NEUROPHYSIN"/>
    <property type="match status" value="1"/>
</dbReference>
<dbReference type="PANTHER" id="PTHR11681:SF15">
    <property type="entry name" value="VASOTOCIN-NEUROPHYSIN VT"/>
    <property type="match status" value="1"/>
</dbReference>
<dbReference type="Pfam" id="PF00220">
    <property type="entry name" value="Hormone_4"/>
    <property type="match status" value="1"/>
</dbReference>
<dbReference type="Pfam" id="PF00184">
    <property type="entry name" value="Hormone_5"/>
    <property type="match status" value="1"/>
</dbReference>
<dbReference type="PIRSF" id="PIRSF001815">
    <property type="entry name" value="Nonapeptide_hormone_precursor"/>
    <property type="match status" value="1"/>
</dbReference>
<dbReference type="PRINTS" id="PR00831">
    <property type="entry name" value="NEUROPHYSIN"/>
</dbReference>
<dbReference type="SMART" id="SM00003">
    <property type="entry name" value="NH"/>
    <property type="match status" value="1"/>
</dbReference>
<dbReference type="SUPFAM" id="SSF49606">
    <property type="entry name" value="Neurophysin II"/>
    <property type="match status" value="1"/>
</dbReference>
<dbReference type="PROSITE" id="PS00264">
    <property type="entry name" value="NEUROHYPOPHYS_HORM"/>
    <property type="match status" value="1"/>
</dbReference>
<keyword id="KW-0027">Amidation</keyword>
<keyword id="KW-0165">Cleavage on pair of basic residues</keyword>
<keyword id="KW-1015">Disulfide bond</keyword>
<keyword id="KW-0325">Glycoprotein</keyword>
<keyword id="KW-0372">Hormone</keyword>
<keyword id="KW-0964">Secreted</keyword>
<keyword id="KW-0732">Signal</keyword>
<sequence>TAPVPACFLCLLALSSACYIQNCPRGGKRSYPDTAVRQCIPCGPGNRGNCFGPNICCGEDLGCYVGTPETLRCVEETYLPSPCEAGGKPCSSGGRCAAPGVCCSDDTCVVDSSCLDEDSERRRVTPEQNMTQMDGSASDLLLRLMHMANRQQQSKHQFY</sequence>
<accession>P08163</accession>
<proteinExistence type="evidence at transcript level"/>
<name>NEUV_BUFJA</name>
<protein>
    <recommendedName>
        <fullName>Vasotocin-neurophysin VT</fullName>
        <shortName>VT</shortName>
    </recommendedName>
    <component>
        <recommendedName>
            <fullName>Hydrin-2</fullName>
        </recommendedName>
        <alternativeName>
            <fullName>Hydrin II</fullName>
        </alternativeName>
    </component>
    <component>
        <recommendedName>
            <fullName>Vasotocin</fullName>
        </recommendedName>
    </component>
    <component>
        <recommendedName>
            <fullName>Neurophysin VT</fullName>
        </recommendedName>
    </component>
    <component>
        <recommendedName>
            <fullName>Glycoprotein</fullName>
        </recommendedName>
    </component>
</protein>
<feature type="signal peptide">
    <location>
        <begin position="1" status="less than"/>
        <end position="17"/>
    </location>
</feature>
<feature type="peptide" id="PRO_0000020534" description="Hydrin-2">
    <location>
        <begin position="18"/>
        <end position="27"/>
    </location>
</feature>
<feature type="peptide" id="PRO_0000020535" description="Vasotocin">
    <location>
        <begin position="18"/>
        <end position="26"/>
    </location>
</feature>
<feature type="chain" id="PRO_0000020536" description="Neurophysin VT">
    <location>
        <begin position="30"/>
        <end position="122"/>
    </location>
</feature>
<feature type="peptide" id="PRO_0000020537" description="Glycoprotein">
    <location>
        <begin position="124"/>
        <end position="159"/>
    </location>
</feature>
<feature type="modified residue" description="Glycine amide" evidence="1">
    <location>
        <position position="26"/>
    </location>
</feature>
<feature type="glycosylation site" description="N-linked (GlcNAc...) asparagine" evidence="3">
    <location>
        <position position="129"/>
    </location>
</feature>
<feature type="disulfide bond" evidence="2">
    <location>
        <begin position="18"/>
        <end position="23"/>
    </location>
</feature>
<feature type="disulfide bond" evidence="2">
    <location>
        <begin position="39"/>
        <end position="83"/>
    </location>
</feature>
<feature type="disulfide bond" evidence="2">
    <location>
        <begin position="42"/>
        <end position="56"/>
    </location>
</feature>
<feature type="disulfide bond" evidence="2">
    <location>
        <begin position="50"/>
        <end position="73"/>
    </location>
</feature>
<feature type="disulfide bond" evidence="2">
    <location>
        <begin position="57"/>
        <end position="63"/>
    </location>
</feature>
<feature type="disulfide bond" evidence="2">
    <location>
        <begin position="90"/>
        <end position="102"/>
    </location>
</feature>
<feature type="disulfide bond" evidence="2">
    <location>
        <begin position="96"/>
        <end position="114"/>
    </location>
</feature>
<feature type="disulfide bond" evidence="2">
    <location>
        <begin position="103"/>
        <end position="108"/>
    </location>
</feature>
<feature type="non-terminal residue">
    <location>
        <position position="1"/>
    </location>
</feature>
<reference key="1">
    <citation type="journal article" date="1987" name="Proc. Natl. Acad. Sci. U.S.A.">
        <title>Cloning and sequence analysis of cDNAs for neurohypophysial hormones vasotocin and mesotocin for the hypothalamus of toad, Bufo japonicus.</title>
        <authorList>
            <person name="Nojiri H."/>
            <person name="Ishida I."/>
            <person name="Miyashita E."/>
            <person name="Sato M."/>
            <person name="Urano A."/>
            <person name="Deguchi T."/>
        </authorList>
    </citation>
    <scope>NUCLEOTIDE SEQUENCE [MRNA]</scope>
</reference>
<organism>
    <name type="scientific">Bufo japonicus</name>
    <name type="common">Japanese common toad</name>
    <name type="synonym">Bufo praetextatus</name>
    <dbReference type="NCBI Taxonomy" id="8387"/>
    <lineage>
        <taxon>Eukaryota</taxon>
        <taxon>Metazoa</taxon>
        <taxon>Chordata</taxon>
        <taxon>Craniata</taxon>
        <taxon>Vertebrata</taxon>
        <taxon>Euteleostomi</taxon>
        <taxon>Amphibia</taxon>
        <taxon>Batrachia</taxon>
        <taxon>Anura</taxon>
        <taxon>Neobatrachia</taxon>
        <taxon>Hyloidea</taxon>
        <taxon>Bufonidae</taxon>
        <taxon>Bufo</taxon>
    </lineage>
</organism>
<comment type="function">
    <text>Vasotocin is an antidiuretic hormone.</text>
</comment>
<comment type="subcellular location">
    <subcellularLocation>
        <location>Secreted</location>
    </subcellularLocation>
</comment>
<comment type="PTM">
    <text evidence="1">Seven disulfide bonds are present in neurophysin.</text>
</comment>
<comment type="similarity">
    <text evidence="4">Belongs to the vasopressin/oxytocin family.</text>
</comment>